<accession>B7IP83</accession>
<feature type="chain" id="PRO_1000123117" description="Glycerol-3-phosphate dehydrogenase [NAD(P)+]">
    <location>
        <begin position="1"/>
        <end position="340"/>
    </location>
</feature>
<feature type="active site" description="Proton acceptor" evidence="1">
    <location>
        <position position="192"/>
    </location>
</feature>
<feature type="binding site" evidence="1">
    <location>
        <position position="11"/>
    </location>
    <ligand>
        <name>NADPH</name>
        <dbReference type="ChEBI" id="CHEBI:57783"/>
    </ligand>
</feature>
<feature type="binding site" evidence="1">
    <location>
        <position position="12"/>
    </location>
    <ligand>
        <name>NADPH</name>
        <dbReference type="ChEBI" id="CHEBI:57783"/>
    </ligand>
</feature>
<feature type="binding site" evidence="1">
    <location>
        <position position="33"/>
    </location>
    <ligand>
        <name>NADPH</name>
        <dbReference type="ChEBI" id="CHEBI:57783"/>
    </ligand>
</feature>
<feature type="binding site" evidence="1">
    <location>
        <position position="106"/>
    </location>
    <ligand>
        <name>NADPH</name>
        <dbReference type="ChEBI" id="CHEBI:57783"/>
    </ligand>
</feature>
<feature type="binding site" evidence="1">
    <location>
        <position position="106"/>
    </location>
    <ligand>
        <name>sn-glycerol 3-phosphate</name>
        <dbReference type="ChEBI" id="CHEBI:57597"/>
    </ligand>
</feature>
<feature type="binding site" evidence="1">
    <location>
        <position position="137"/>
    </location>
    <ligand>
        <name>sn-glycerol 3-phosphate</name>
        <dbReference type="ChEBI" id="CHEBI:57597"/>
    </ligand>
</feature>
<feature type="binding site" evidence="1">
    <location>
        <position position="139"/>
    </location>
    <ligand>
        <name>sn-glycerol 3-phosphate</name>
        <dbReference type="ChEBI" id="CHEBI:57597"/>
    </ligand>
</feature>
<feature type="binding site" evidence="1">
    <location>
        <position position="141"/>
    </location>
    <ligand>
        <name>NADPH</name>
        <dbReference type="ChEBI" id="CHEBI:57783"/>
    </ligand>
</feature>
<feature type="binding site" evidence="1">
    <location>
        <position position="192"/>
    </location>
    <ligand>
        <name>sn-glycerol 3-phosphate</name>
        <dbReference type="ChEBI" id="CHEBI:57597"/>
    </ligand>
</feature>
<feature type="binding site" evidence="1">
    <location>
        <position position="245"/>
    </location>
    <ligand>
        <name>sn-glycerol 3-phosphate</name>
        <dbReference type="ChEBI" id="CHEBI:57597"/>
    </ligand>
</feature>
<feature type="binding site" evidence="1">
    <location>
        <position position="255"/>
    </location>
    <ligand>
        <name>sn-glycerol 3-phosphate</name>
        <dbReference type="ChEBI" id="CHEBI:57597"/>
    </ligand>
</feature>
<feature type="binding site" evidence="1">
    <location>
        <position position="256"/>
    </location>
    <ligand>
        <name>NADPH</name>
        <dbReference type="ChEBI" id="CHEBI:57783"/>
    </ligand>
</feature>
<feature type="binding site" evidence="1">
    <location>
        <position position="256"/>
    </location>
    <ligand>
        <name>sn-glycerol 3-phosphate</name>
        <dbReference type="ChEBI" id="CHEBI:57597"/>
    </ligand>
</feature>
<feature type="binding site" evidence="1">
    <location>
        <position position="257"/>
    </location>
    <ligand>
        <name>sn-glycerol 3-phosphate</name>
        <dbReference type="ChEBI" id="CHEBI:57597"/>
    </ligand>
</feature>
<feature type="binding site" evidence="1">
    <location>
        <position position="280"/>
    </location>
    <ligand>
        <name>NADPH</name>
        <dbReference type="ChEBI" id="CHEBI:57783"/>
    </ligand>
</feature>
<feature type="binding site" evidence="1">
    <location>
        <position position="282"/>
    </location>
    <ligand>
        <name>NADPH</name>
        <dbReference type="ChEBI" id="CHEBI:57783"/>
    </ligand>
</feature>
<comment type="function">
    <text evidence="1">Catalyzes the reduction of the glycolytic intermediate dihydroxyacetone phosphate (DHAP) to sn-glycerol 3-phosphate (G3P), the key precursor for phospholipid synthesis.</text>
</comment>
<comment type="catalytic activity">
    <reaction evidence="1">
        <text>sn-glycerol 3-phosphate + NAD(+) = dihydroxyacetone phosphate + NADH + H(+)</text>
        <dbReference type="Rhea" id="RHEA:11092"/>
        <dbReference type="ChEBI" id="CHEBI:15378"/>
        <dbReference type="ChEBI" id="CHEBI:57540"/>
        <dbReference type="ChEBI" id="CHEBI:57597"/>
        <dbReference type="ChEBI" id="CHEBI:57642"/>
        <dbReference type="ChEBI" id="CHEBI:57945"/>
        <dbReference type="EC" id="1.1.1.94"/>
    </reaction>
    <physiologicalReaction direction="right-to-left" evidence="1">
        <dbReference type="Rhea" id="RHEA:11094"/>
    </physiologicalReaction>
</comment>
<comment type="catalytic activity">
    <reaction evidence="1">
        <text>sn-glycerol 3-phosphate + NADP(+) = dihydroxyacetone phosphate + NADPH + H(+)</text>
        <dbReference type="Rhea" id="RHEA:11096"/>
        <dbReference type="ChEBI" id="CHEBI:15378"/>
        <dbReference type="ChEBI" id="CHEBI:57597"/>
        <dbReference type="ChEBI" id="CHEBI:57642"/>
        <dbReference type="ChEBI" id="CHEBI:57783"/>
        <dbReference type="ChEBI" id="CHEBI:58349"/>
        <dbReference type="EC" id="1.1.1.94"/>
    </reaction>
    <physiologicalReaction direction="right-to-left" evidence="1">
        <dbReference type="Rhea" id="RHEA:11098"/>
    </physiologicalReaction>
</comment>
<comment type="pathway">
    <text evidence="1">Membrane lipid metabolism; glycerophospholipid metabolism.</text>
</comment>
<comment type="subcellular location">
    <subcellularLocation>
        <location evidence="1">Cytoplasm</location>
    </subcellularLocation>
</comment>
<comment type="similarity">
    <text evidence="1">Belongs to the NAD-dependent glycerol-3-phosphate dehydrogenase family.</text>
</comment>
<protein>
    <recommendedName>
        <fullName evidence="1">Glycerol-3-phosphate dehydrogenase [NAD(P)+]</fullName>
        <ecNumber evidence="1">1.1.1.94</ecNumber>
    </recommendedName>
    <alternativeName>
        <fullName evidence="1">NAD(P)(+)-dependent glycerol-3-phosphate dehydrogenase</fullName>
    </alternativeName>
    <alternativeName>
        <fullName evidence="1">NAD(P)H-dependent dihydroxyacetone-phosphate reductase</fullName>
    </alternativeName>
</protein>
<evidence type="ECO:0000255" key="1">
    <source>
        <dbReference type="HAMAP-Rule" id="MF_00394"/>
    </source>
</evidence>
<dbReference type="EC" id="1.1.1.94" evidence="1"/>
<dbReference type="EMBL" id="CP001186">
    <property type="protein sequence ID" value="ACK93142.1"/>
    <property type="molecule type" value="Genomic_DNA"/>
</dbReference>
<dbReference type="RefSeq" id="WP_000161783.1">
    <property type="nucleotide sequence ID" value="NC_011772.1"/>
</dbReference>
<dbReference type="SMR" id="B7IP83"/>
<dbReference type="KEGG" id="bcg:BCG9842_B3784"/>
<dbReference type="HOGENOM" id="CLU_033449_0_2_9"/>
<dbReference type="UniPathway" id="UPA00940"/>
<dbReference type="Proteomes" id="UP000006744">
    <property type="component" value="Chromosome"/>
</dbReference>
<dbReference type="GO" id="GO:0005829">
    <property type="term" value="C:cytosol"/>
    <property type="evidence" value="ECO:0007669"/>
    <property type="project" value="TreeGrafter"/>
</dbReference>
<dbReference type="GO" id="GO:0047952">
    <property type="term" value="F:glycerol-3-phosphate dehydrogenase [NAD(P)+] activity"/>
    <property type="evidence" value="ECO:0007669"/>
    <property type="project" value="UniProtKB-UniRule"/>
</dbReference>
<dbReference type="GO" id="GO:0051287">
    <property type="term" value="F:NAD binding"/>
    <property type="evidence" value="ECO:0007669"/>
    <property type="project" value="InterPro"/>
</dbReference>
<dbReference type="GO" id="GO:0005975">
    <property type="term" value="P:carbohydrate metabolic process"/>
    <property type="evidence" value="ECO:0007669"/>
    <property type="project" value="InterPro"/>
</dbReference>
<dbReference type="GO" id="GO:0046167">
    <property type="term" value="P:glycerol-3-phosphate biosynthetic process"/>
    <property type="evidence" value="ECO:0007669"/>
    <property type="project" value="UniProtKB-UniRule"/>
</dbReference>
<dbReference type="GO" id="GO:0046168">
    <property type="term" value="P:glycerol-3-phosphate catabolic process"/>
    <property type="evidence" value="ECO:0007669"/>
    <property type="project" value="InterPro"/>
</dbReference>
<dbReference type="GO" id="GO:0006650">
    <property type="term" value="P:glycerophospholipid metabolic process"/>
    <property type="evidence" value="ECO:0007669"/>
    <property type="project" value="UniProtKB-UniRule"/>
</dbReference>
<dbReference type="GO" id="GO:0008654">
    <property type="term" value="P:phospholipid biosynthetic process"/>
    <property type="evidence" value="ECO:0007669"/>
    <property type="project" value="UniProtKB-KW"/>
</dbReference>
<dbReference type="FunFam" id="1.10.1040.10:FF:000001">
    <property type="entry name" value="Glycerol-3-phosphate dehydrogenase [NAD(P)+]"/>
    <property type="match status" value="1"/>
</dbReference>
<dbReference type="FunFam" id="3.40.50.720:FF:000019">
    <property type="entry name" value="Glycerol-3-phosphate dehydrogenase [NAD(P)+]"/>
    <property type="match status" value="1"/>
</dbReference>
<dbReference type="Gene3D" id="1.10.1040.10">
    <property type="entry name" value="N-(1-d-carboxylethyl)-l-norvaline Dehydrogenase, domain 2"/>
    <property type="match status" value="1"/>
</dbReference>
<dbReference type="Gene3D" id="3.40.50.720">
    <property type="entry name" value="NAD(P)-binding Rossmann-like Domain"/>
    <property type="match status" value="1"/>
</dbReference>
<dbReference type="HAMAP" id="MF_00394">
    <property type="entry name" value="NAD_Glyc3P_dehydrog"/>
    <property type="match status" value="1"/>
</dbReference>
<dbReference type="InterPro" id="IPR008927">
    <property type="entry name" value="6-PGluconate_DH-like_C_sf"/>
</dbReference>
<dbReference type="InterPro" id="IPR013328">
    <property type="entry name" value="6PGD_dom2"/>
</dbReference>
<dbReference type="InterPro" id="IPR006168">
    <property type="entry name" value="G3P_DH_NAD-dep"/>
</dbReference>
<dbReference type="InterPro" id="IPR006109">
    <property type="entry name" value="G3P_DH_NAD-dep_C"/>
</dbReference>
<dbReference type="InterPro" id="IPR011128">
    <property type="entry name" value="G3P_DH_NAD-dep_N"/>
</dbReference>
<dbReference type="InterPro" id="IPR036291">
    <property type="entry name" value="NAD(P)-bd_dom_sf"/>
</dbReference>
<dbReference type="NCBIfam" id="NF000940">
    <property type="entry name" value="PRK00094.1-2"/>
    <property type="match status" value="1"/>
</dbReference>
<dbReference type="NCBIfam" id="NF000941">
    <property type="entry name" value="PRK00094.1-3"/>
    <property type="match status" value="1"/>
</dbReference>
<dbReference type="NCBIfam" id="NF000942">
    <property type="entry name" value="PRK00094.1-4"/>
    <property type="match status" value="1"/>
</dbReference>
<dbReference type="PANTHER" id="PTHR11728">
    <property type="entry name" value="GLYCEROL-3-PHOSPHATE DEHYDROGENASE"/>
    <property type="match status" value="1"/>
</dbReference>
<dbReference type="PANTHER" id="PTHR11728:SF1">
    <property type="entry name" value="GLYCEROL-3-PHOSPHATE DEHYDROGENASE [NAD(+)] 2, CHLOROPLASTIC"/>
    <property type="match status" value="1"/>
</dbReference>
<dbReference type="Pfam" id="PF07479">
    <property type="entry name" value="NAD_Gly3P_dh_C"/>
    <property type="match status" value="1"/>
</dbReference>
<dbReference type="Pfam" id="PF01210">
    <property type="entry name" value="NAD_Gly3P_dh_N"/>
    <property type="match status" value="1"/>
</dbReference>
<dbReference type="PIRSF" id="PIRSF000114">
    <property type="entry name" value="Glycerol-3-P_dh"/>
    <property type="match status" value="1"/>
</dbReference>
<dbReference type="PRINTS" id="PR00077">
    <property type="entry name" value="GPDHDRGNASE"/>
</dbReference>
<dbReference type="SUPFAM" id="SSF48179">
    <property type="entry name" value="6-phosphogluconate dehydrogenase C-terminal domain-like"/>
    <property type="match status" value="1"/>
</dbReference>
<dbReference type="SUPFAM" id="SSF51735">
    <property type="entry name" value="NAD(P)-binding Rossmann-fold domains"/>
    <property type="match status" value="1"/>
</dbReference>
<dbReference type="PROSITE" id="PS00957">
    <property type="entry name" value="NAD_G3PDH"/>
    <property type="match status" value="1"/>
</dbReference>
<proteinExistence type="inferred from homology"/>
<organism>
    <name type="scientific">Bacillus cereus (strain G9842)</name>
    <dbReference type="NCBI Taxonomy" id="405531"/>
    <lineage>
        <taxon>Bacteria</taxon>
        <taxon>Bacillati</taxon>
        <taxon>Bacillota</taxon>
        <taxon>Bacilli</taxon>
        <taxon>Bacillales</taxon>
        <taxon>Bacillaceae</taxon>
        <taxon>Bacillus</taxon>
        <taxon>Bacillus cereus group</taxon>
    </lineage>
</organism>
<reference key="1">
    <citation type="submission" date="2008-10" db="EMBL/GenBank/DDBJ databases">
        <title>Genome sequence of Bacillus cereus G9842.</title>
        <authorList>
            <person name="Dodson R.J."/>
            <person name="Durkin A.S."/>
            <person name="Rosovitz M.J."/>
            <person name="Rasko D.A."/>
            <person name="Hoffmaster A."/>
            <person name="Ravel J."/>
            <person name="Sutton G."/>
        </authorList>
    </citation>
    <scope>NUCLEOTIDE SEQUENCE [LARGE SCALE GENOMIC DNA]</scope>
    <source>
        <strain>G9842</strain>
    </source>
</reference>
<gene>
    <name evidence="1" type="primary">gpsA</name>
    <name type="ordered locus">BCG9842_B3784</name>
</gene>
<name>GPDA_BACC2</name>
<keyword id="KW-0963">Cytoplasm</keyword>
<keyword id="KW-0444">Lipid biosynthesis</keyword>
<keyword id="KW-0443">Lipid metabolism</keyword>
<keyword id="KW-0520">NAD</keyword>
<keyword id="KW-0521">NADP</keyword>
<keyword id="KW-0547">Nucleotide-binding</keyword>
<keyword id="KW-0560">Oxidoreductase</keyword>
<keyword id="KW-0594">Phospholipid biosynthesis</keyword>
<keyword id="KW-1208">Phospholipid metabolism</keyword>
<sequence>MTKITVVGAGSWGTALAMVLADNGHDVRIWGNRSELMDEMNTKHENSRYLPGITLPSTIVAYSSLEEALVDVNTVLLVVPTKAYRDVLQEMKEIVTEPITWIHASKGIEPGTSKRISEVIEEEIPENLIKDVVVLSGPSHAEEVGLRQATTVTSAAKRMEAAEEVQDLFMNSYFRVYTNPDIVGVELGGALKNIIALAAGITDGLGLGDNAKAALMTRGLTEIARLGRKMGGNPLTFAGLTGMGDLIVTCTSVHSRNWRAGNMLGKGHSLEEVLESMGMVVEGVRTTKAAHELAEKMEVEMPITAALYDVLFNGNNVKDAVGSLMGRVRKHEVEAIPDLL</sequence>